<geneLocation type="chloroplast"/>
<name>NU6C_HELAN</name>
<feature type="chain" id="PRO_0000360257" description="NAD(P)H-quinone oxidoreductase subunit 6, chloroplastic">
    <location>
        <begin position="1"/>
        <end position="176"/>
    </location>
</feature>
<feature type="transmembrane region" description="Helical" evidence="2">
    <location>
        <begin position="10"/>
        <end position="30"/>
    </location>
</feature>
<feature type="transmembrane region" description="Helical" evidence="2">
    <location>
        <begin position="32"/>
        <end position="52"/>
    </location>
</feature>
<feature type="transmembrane region" description="Helical" evidence="2">
    <location>
        <begin position="61"/>
        <end position="81"/>
    </location>
</feature>
<feature type="transmembrane region" description="Helical" evidence="2">
    <location>
        <begin position="92"/>
        <end position="112"/>
    </location>
</feature>
<feature type="transmembrane region" description="Helical" evidence="2">
    <location>
        <begin position="152"/>
        <end position="172"/>
    </location>
</feature>
<keyword id="KW-0150">Chloroplast</keyword>
<keyword id="KW-0472">Membrane</keyword>
<keyword id="KW-0520">NAD</keyword>
<keyword id="KW-0521">NADP</keyword>
<keyword id="KW-0934">Plastid</keyword>
<keyword id="KW-0618">Plastoquinone</keyword>
<keyword id="KW-0874">Quinone</keyword>
<keyword id="KW-0793">Thylakoid</keyword>
<keyword id="KW-1278">Translocase</keyword>
<keyword id="KW-0812">Transmembrane</keyword>
<keyword id="KW-1133">Transmembrane helix</keyword>
<keyword id="KW-0813">Transport</keyword>
<comment type="function">
    <text evidence="1">NDH shuttles electrons from NAD(P)H:plastoquinone, via FMN and iron-sulfur (Fe-S) centers, to quinones in the photosynthetic chain and possibly in a chloroplast respiratory chain. The immediate electron acceptor for the enzyme in this species is believed to be plastoquinone. Couples the redox reaction to proton translocation, and thus conserves the redox energy in a proton gradient (By similarity).</text>
</comment>
<comment type="catalytic activity">
    <reaction>
        <text>a plastoquinone + NADH + (n+1) H(+)(in) = a plastoquinol + NAD(+) + n H(+)(out)</text>
        <dbReference type="Rhea" id="RHEA:42608"/>
        <dbReference type="Rhea" id="RHEA-COMP:9561"/>
        <dbReference type="Rhea" id="RHEA-COMP:9562"/>
        <dbReference type="ChEBI" id="CHEBI:15378"/>
        <dbReference type="ChEBI" id="CHEBI:17757"/>
        <dbReference type="ChEBI" id="CHEBI:57540"/>
        <dbReference type="ChEBI" id="CHEBI:57945"/>
        <dbReference type="ChEBI" id="CHEBI:62192"/>
    </reaction>
</comment>
<comment type="catalytic activity">
    <reaction>
        <text>a plastoquinone + NADPH + (n+1) H(+)(in) = a plastoquinol + NADP(+) + n H(+)(out)</text>
        <dbReference type="Rhea" id="RHEA:42612"/>
        <dbReference type="Rhea" id="RHEA-COMP:9561"/>
        <dbReference type="Rhea" id="RHEA-COMP:9562"/>
        <dbReference type="ChEBI" id="CHEBI:15378"/>
        <dbReference type="ChEBI" id="CHEBI:17757"/>
        <dbReference type="ChEBI" id="CHEBI:57783"/>
        <dbReference type="ChEBI" id="CHEBI:58349"/>
        <dbReference type="ChEBI" id="CHEBI:62192"/>
    </reaction>
</comment>
<comment type="subunit">
    <text evidence="1">NDH is composed of at least 16 different subunits, 5 of which are encoded in the nucleus.</text>
</comment>
<comment type="subcellular location">
    <subcellularLocation>
        <location evidence="1">Plastid</location>
        <location evidence="1">Chloroplast thylakoid membrane</location>
        <topology evidence="1">Multi-pass membrane protein</topology>
    </subcellularLocation>
</comment>
<comment type="similarity">
    <text evidence="3">Belongs to the complex I subunit 6 family.</text>
</comment>
<accession>Q1KXQ6</accession>
<evidence type="ECO:0000250" key="1"/>
<evidence type="ECO:0000255" key="2"/>
<evidence type="ECO:0000305" key="3"/>
<sequence length="176" mass="19143">MDLPGLIHDFLLVFLGLGLILGGLGVVLLANPIYSAFSLGLVFVCISLFYILSNSHFVAAAQLLIYVGAINVLIIFAVMFINGSEYSKDFHLWTVGDGVTSVVCTSLFVSLITTIPDTSWYGIIWTTKANQIIEQDLISNSQQIGIHLSTDFFIPFEFISIILLVALIGAIAVARQ</sequence>
<gene>
    <name type="primary">ndhG</name>
</gene>
<organism>
    <name type="scientific">Helianthus annuus</name>
    <name type="common">Common sunflower</name>
    <dbReference type="NCBI Taxonomy" id="4232"/>
    <lineage>
        <taxon>Eukaryota</taxon>
        <taxon>Viridiplantae</taxon>
        <taxon>Streptophyta</taxon>
        <taxon>Embryophyta</taxon>
        <taxon>Tracheophyta</taxon>
        <taxon>Spermatophyta</taxon>
        <taxon>Magnoliopsida</taxon>
        <taxon>eudicotyledons</taxon>
        <taxon>Gunneridae</taxon>
        <taxon>Pentapetalae</taxon>
        <taxon>asterids</taxon>
        <taxon>campanulids</taxon>
        <taxon>Asterales</taxon>
        <taxon>Asteraceae</taxon>
        <taxon>Asteroideae</taxon>
        <taxon>Heliantheae alliance</taxon>
        <taxon>Heliantheae</taxon>
        <taxon>Helianthus</taxon>
    </lineage>
</organism>
<protein>
    <recommendedName>
        <fullName>NAD(P)H-quinone oxidoreductase subunit 6, chloroplastic</fullName>
        <ecNumber>7.1.1.-</ecNumber>
    </recommendedName>
    <alternativeName>
        <fullName>NAD(P)H dehydrogenase subunit 6</fullName>
    </alternativeName>
    <alternativeName>
        <fullName>NADH-plastoquinone oxidoreductase subunit 6</fullName>
    </alternativeName>
</protein>
<proteinExistence type="inferred from homology"/>
<reference key="1">
    <citation type="submission" date="2006-01" db="EMBL/GenBank/DDBJ databases">
        <title>A comparison of the first two published chloroplast genomes in Asteraceae: Lactuca and Helianthus.</title>
        <authorList>
            <person name="Timme R.E."/>
            <person name="Kuehl J.V."/>
            <person name="Boore J.L."/>
            <person name="Jansen R.K."/>
        </authorList>
    </citation>
    <scope>NUCLEOTIDE SEQUENCE [LARGE SCALE GENOMIC DNA]</scope>
    <source>
        <strain>cv. HA383</strain>
    </source>
</reference>
<dbReference type="EC" id="7.1.1.-"/>
<dbReference type="EMBL" id="DQ383815">
    <property type="protein sequence ID" value="ABD47198.1"/>
    <property type="molecule type" value="Genomic_DNA"/>
</dbReference>
<dbReference type="RefSeq" id="YP_588170.1">
    <property type="nucleotide sequence ID" value="NC_007977.1"/>
</dbReference>
<dbReference type="SMR" id="Q1KXQ6"/>
<dbReference type="GeneID" id="4055624"/>
<dbReference type="KEGG" id="han:4055624"/>
<dbReference type="OrthoDB" id="1893972at2759"/>
<dbReference type="GO" id="GO:0009535">
    <property type="term" value="C:chloroplast thylakoid membrane"/>
    <property type="evidence" value="ECO:0007669"/>
    <property type="project" value="UniProtKB-SubCell"/>
</dbReference>
<dbReference type="GO" id="GO:0008137">
    <property type="term" value="F:NADH dehydrogenase (ubiquinone) activity"/>
    <property type="evidence" value="ECO:0007669"/>
    <property type="project" value="InterPro"/>
</dbReference>
<dbReference type="GO" id="GO:0048038">
    <property type="term" value="F:quinone binding"/>
    <property type="evidence" value="ECO:0007669"/>
    <property type="project" value="UniProtKB-KW"/>
</dbReference>
<dbReference type="FunFam" id="1.20.120.1200:FF:000002">
    <property type="entry name" value="NAD(P)H-quinone oxidoreductase subunit 6, chloroplastic"/>
    <property type="match status" value="1"/>
</dbReference>
<dbReference type="Gene3D" id="1.20.120.1200">
    <property type="entry name" value="NADH-ubiquinone/plastoquinone oxidoreductase chain 6, subunit NuoJ"/>
    <property type="match status" value="1"/>
</dbReference>
<dbReference type="InterPro" id="IPR050290">
    <property type="entry name" value="NAD(P)H-Q_Oxidoreduct_6"/>
</dbReference>
<dbReference type="InterPro" id="IPR001457">
    <property type="entry name" value="NADH_UbQ/plastoQ_OxRdtase_su6"/>
</dbReference>
<dbReference type="InterPro" id="IPR042106">
    <property type="entry name" value="Nuo/plastoQ_OxRdtase_6_NuoJ"/>
</dbReference>
<dbReference type="PANTHER" id="PTHR48479">
    <property type="entry name" value="NAD(P)H-QUINONE OXIDOREDUCTASE SUBUNIT 6, CHLOROPLASTIC"/>
    <property type="match status" value="1"/>
</dbReference>
<dbReference type="PANTHER" id="PTHR48479:SF1">
    <property type="entry name" value="NAD(P)H-QUINONE OXIDOREDUCTASE SUBUNIT 6, CHLOROPLASTIC"/>
    <property type="match status" value="1"/>
</dbReference>
<dbReference type="Pfam" id="PF00499">
    <property type="entry name" value="Oxidored_q3"/>
    <property type="match status" value="1"/>
</dbReference>